<name>RCC2_HUMAN</name>
<keyword id="KW-0002">3D-structure</keyword>
<keyword id="KW-0007">Acetylation</keyword>
<keyword id="KW-0131">Cell cycle</keyword>
<keyword id="KW-0132">Cell division</keyword>
<keyword id="KW-1003">Cell membrane</keyword>
<keyword id="KW-0137">Centromere</keyword>
<keyword id="KW-0158">Chromosome</keyword>
<keyword id="KW-0963">Cytoplasm</keyword>
<keyword id="KW-0206">Cytoskeleton</keyword>
<keyword id="KW-0344">Guanine-nucleotide releasing factor</keyword>
<keyword id="KW-0472">Membrane</keyword>
<keyword id="KW-0493">Microtubule</keyword>
<keyword id="KW-0498">Mitosis</keyword>
<keyword id="KW-0539">Nucleus</keyword>
<keyword id="KW-0597">Phosphoprotein</keyword>
<keyword id="KW-1267">Proteomics identification</keyword>
<keyword id="KW-1185">Reference proteome</keyword>
<keyword id="KW-0677">Repeat</keyword>
<organism>
    <name type="scientific">Homo sapiens</name>
    <name type="common">Human</name>
    <dbReference type="NCBI Taxonomy" id="9606"/>
    <lineage>
        <taxon>Eukaryota</taxon>
        <taxon>Metazoa</taxon>
        <taxon>Chordata</taxon>
        <taxon>Craniata</taxon>
        <taxon>Vertebrata</taxon>
        <taxon>Euteleostomi</taxon>
        <taxon>Mammalia</taxon>
        <taxon>Eutheria</taxon>
        <taxon>Euarchontoglires</taxon>
        <taxon>Primates</taxon>
        <taxon>Haplorrhini</taxon>
        <taxon>Catarrhini</taxon>
        <taxon>Hominidae</taxon>
        <taxon>Homo</taxon>
    </lineage>
</organism>
<sequence length="522" mass="56085">MPRKKAAAAAWEEPSSGNGTARAGPRKRGGPAGRKRERPERCSSSSGGGSSGDEDGLELDGAPGGGKRAARPATAGKAGGAAVVITEPEHTKERVKLEGSKCKGQLLIFGATNWDLIGRKEVPKQQAAYRNLGQNLWGPHRYGCLAGVRVRTVVSGSCAAHSLLITTEGKLWSWGRNEKGQLGHGDTKRVEAPRLIEGLSHEVIVSAACGRNHTLALTETGSVFAFGENKMGQLGLGNQTDAVPSPAQIMYNGQPITKMACGAEFSMIMDCKGNLYSFGCPEYGQLGHNSDGKFIARAQRIEYDCELVPRRVAIFIEKTKDGQILPVPNVVVRDVACGANHTLVLDSQKRVFSWGFGGYGRLGHAEQKDEMVPRLVKLFDFPGRGASQIYAGYTCSFAVSEVGGLFFWGATNTSRESTMYPKAVQDLCGWRIRSLACGKSSIIVAADESTISWGPSPTFGELGYGDHKPKSSTAAQEVKTLDGIFSEQVAMGYSHSLVIARDESETEKEKIKKLPEYNPRTL</sequence>
<gene>
    <name type="primary">RCC2</name>
    <name type="synonym">KIAA1470</name>
    <name type="synonym">TD60</name>
</gene>
<dbReference type="EMBL" id="AJ421269">
    <property type="protein sequence ID" value="CAD13148.1"/>
    <property type="molecule type" value="mRNA"/>
</dbReference>
<dbReference type="EMBL" id="AB040903">
    <property type="protein sequence ID" value="BAA95994.1"/>
    <property type="status" value="ALT_INIT"/>
    <property type="molecule type" value="mRNA"/>
</dbReference>
<dbReference type="EMBL" id="BC004933">
    <property type="protein sequence ID" value="AAH04933.1"/>
    <property type="molecule type" value="mRNA"/>
</dbReference>
<dbReference type="EMBL" id="BC042141">
    <property type="protein sequence ID" value="AAH42141.1"/>
    <property type="molecule type" value="mRNA"/>
</dbReference>
<dbReference type="EMBL" id="BC053908">
    <property type="protein sequence ID" value="AAH53908.1"/>
    <property type="molecule type" value="mRNA"/>
</dbReference>
<dbReference type="EMBL" id="AL359612">
    <property type="protein sequence ID" value="CAB94882.1"/>
    <property type="status" value="ALT_FRAME"/>
    <property type="molecule type" value="mRNA"/>
</dbReference>
<dbReference type="CCDS" id="CCDS181.1"/>
<dbReference type="PIR" id="T50630">
    <property type="entry name" value="T50630"/>
</dbReference>
<dbReference type="RefSeq" id="NP_001129676.1">
    <property type="nucleotide sequence ID" value="NM_001136204.3"/>
</dbReference>
<dbReference type="RefSeq" id="NP_061185.1">
    <property type="nucleotide sequence ID" value="NM_018715.4"/>
</dbReference>
<dbReference type="PDB" id="5GWN">
    <property type="method" value="X-ray"/>
    <property type="resolution" value="1.31 A"/>
    <property type="chains" value="A=89-522"/>
</dbReference>
<dbReference type="PDBsum" id="5GWN"/>
<dbReference type="SMR" id="Q9P258"/>
<dbReference type="BioGRID" id="121001">
    <property type="interactions" value="240"/>
</dbReference>
<dbReference type="FunCoup" id="Q9P258">
    <property type="interactions" value="2057"/>
</dbReference>
<dbReference type="IntAct" id="Q9P258">
    <property type="interactions" value="55"/>
</dbReference>
<dbReference type="MINT" id="Q9P258"/>
<dbReference type="STRING" id="9606.ENSP00000364585"/>
<dbReference type="GlyGen" id="Q9P258">
    <property type="glycosylation" value="2 sites, 1 N-linked glycan (1 site), 1 O-linked glycan (1 site)"/>
</dbReference>
<dbReference type="iPTMnet" id="Q9P258"/>
<dbReference type="MetOSite" id="Q9P258"/>
<dbReference type="PhosphoSitePlus" id="Q9P258"/>
<dbReference type="SwissPalm" id="Q9P258"/>
<dbReference type="BioMuta" id="RCC2"/>
<dbReference type="DMDM" id="71152033"/>
<dbReference type="jPOST" id="Q9P258"/>
<dbReference type="MassIVE" id="Q9P258"/>
<dbReference type="PaxDb" id="9606-ENSP00000364585"/>
<dbReference type="PeptideAtlas" id="Q9P258"/>
<dbReference type="ProteomicsDB" id="83733"/>
<dbReference type="Pumba" id="Q9P258"/>
<dbReference type="Antibodypedia" id="29372">
    <property type="antibodies" value="206 antibodies from 29 providers"/>
</dbReference>
<dbReference type="DNASU" id="55920"/>
<dbReference type="Ensembl" id="ENST00000375433.3">
    <property type="protein sequence ID" value="ENSP00000364582.3"/>
    <property type="gene ID" value="ENSG00000179051.14"/>
</dbReference>
<dbReference type="Ensembl" id="ENST00000375436.9">
    <property type="protein sequence ID" value="ENSP00000364585.4"/>
    <property type="gene ID" value="ENSG00000179051.14"/>
</dbReference>
<dbReference type="Ensembl" id="ENST00000628984.1">
    <property type="protein sequence ID" value="ENSP00000486099.1"/>
    <property type="gene ID" value="ENSG00000281540.3"/>
</dbReference>
<dbReference type="Ensembl" id="ENST00000631021.3">
    <property type="protein sequence ID" value="ENSP00000486447.1"/>
    <property type="gene ID" value="ENSG00000281540.3"/>
</dbReference>
<dbReference type="GeneID" id="55920"/>
<dbReference type="KEGG" id="hsa:55920"/>
<dbReference type="MANE-Select" id="ENST00000375436.9">
    <property type="protein sequence ID" value="ENSP00000364585.4"/>
    <property type="RefSeq nucleotide sequence ID" value="NM_018715.4"/>
    <property type="RefSeq protein sequence ID" value="NP_061185.1"/>
</dbReference>
<dbReference type="UCSC" id="uc001bal.4">
    <property type="organism name" value="human"/>
</dbReference>
<dbReference type="AGR" id="HGNC:30297"/>
<dbReference type="CTD" id="55920"/>
<dbReference type="DisGeNET" id="55920"/>
<dbReference type="GeneCards" id="RCC2"/>
<dbReference type="HGNC" id="HGNC:30297">
    <property type="gene designation" value="RCC2"/>
</dbReference>
<dbReference type="HPA" id="ENSG00000179051">
    <property type="expression patterns" value="Low tissue specificity"/>
</dbReference>
<dbReference type="MIM" id="609587">
    <property type="type" value="gene"/>
</dbReference>
<dbReference type="neXtProt" id="NX_Q9P258"/>
<dbReference type="OpenTargets" id="ENSG00000179051"/>
<dbReference type="PharmGKB" id="PA142671091"/>
<dbReference type="VEuPathDB" id="HostDB:ENSG00000179051"/>
<dbReference type="eggNOG" id="KOG1427">
    <property type="taxonomic scope" value="Eukaryota"/>
</dbReference>
<dbReference type="GeneTree" id="ENSGT00940000156151"/>
<dbReference type="HOGENOM" id="CLU_005210_7_0_1"/>
<dbReference type="InParanoid" id="Q9P258"/>
<dbReference type="OMA" id="GKWKNTG"/>
<dbReference type="OrthoDB" id="297375at2759"/>
<dbReference type="PAN-GO" id="Q9P258">
    <property type="GO annotations" value="2 GO annotations based on evolutionary models"/>
</dbReference>
<dbReference type="PhylomeDB" id="Q9P258"/>
<dbReference type="TreeFam" id="TF101168"/>
<dbReference type="PathwayCommons" id="Q9P258"/>
<dbReference type="Reactome" id="R-HSA-141444">
    <property type="pathway name" value="Amplification of signal from unattached kinetochores via a MAD2 inhibitory signal"/>
</dbReference>
<dbReference type="Reactome" id="R-HSA-2467813">
    <property type="pathway name" value="Separation of Sister Chromatids"/>
</dbReference>
<dbReference type="Reactome" id="R-HSA-2500257">
    <property type="pathway name" value="Resolution of Sister Chromatid Cohesion"/>
</dbReference>
<dbReference type="Reactome" id="R-HSA-5663220">
    <property type="pathway name" value="RHO GTPases Activate Formins"/>
</dbReference>
<dbReference type="Reactome" id="R-HSA-68877">
    <property type="pathway name" value="Mitotic Prometaphase"/>
</dbReference>
<dbReference type="Reactome" id="R-HSA-9648025">
    <property type="pathway name" value="EML4 and NUDC in mitotic spindle formation"/>
</dbReference>
<dbReference type="SignaLink" id="Q9P258"/>
<dbReference type="BioGRID-ORCS" id="55920">
    <property type="hits" value="20 hits in 1156 CRISPR screens"/>
</dbReference>
<dbReference type="CD-CODE" id="91857CE7">
    <property type="entry name" value="Nucleolus"/>
</dbReference>
<dbReference type="CD-CODE" id="DEE660B4">
    <property type="entry name" value="Stress granule"/>
</dbReference>
<dbReference type="ChiTaRS" id="RCC2">
    <property type="organism name" value="human"/>
</dbReference>
<dbReference type="GeneWiki" id="RCC2"/>
<dbReference type="GenomeRNAi" id="55920"/>
<dbReference type="Pharos" id="Q9P258">
    <property type="development level" value="Tbio"/>
</dbReference>
<dbReference type="PRO" id="PR:Q9P258"/>
<dbReference type="Proteomes" id="UP000005640">
    <property type="component" value="Chromosome 1"/>
</dbReference>
<dbReference type="RNAct" id="Q9P258">
    <property type="molecule type" value="protein"/>
</dbReference>
<dbReference type="Bgee" id="ENSG00000179051">
    <property type="expression patterns" value="Expressed in lower esophagus mucosa and 103 other cell types or tissues"/>
</dbReference>
<dbReference type="ExpressionAtlas" id="Q9P258">
    <property type="expression patterns" value="baseline and differential"/>
</dbReference>
<dbReference type="GO" id="GO:0034506">
    <property type="term" value="C:chromosome, centromeric core domain"/>
    <property type="evidence" value="ECO:0000314"/>
    <property type="project" value="UniProtKB"/>
</dbReference>
<dbReference type="GO" id="GO:0005829">
    <property type="term" value="C:cytosol"/>
    <property type="evidence" value="ECO:0000304"/>
    <property type="project" value="Reactome"/>
</dbReference>
<dbReference type="GO" id="GO:0031901">
    <property type="term" value="C:early endosome membrane"/>
    <property type="evidence" value="ECO:0007669"/>
    <property type="project" value="Ensembl"/>
</dbReference>
<dbReference type="GO" id="GO:0005874">
    <property type="term" value="C:microtubule"/>
    <property type="evidence" value="ECO:0007669"/>
    <property type="project" value="UniProtKB-KW"/>
</dbReference>
<dbReference type="GO" id="GO:0030496">
    <property type="term" value="C:midbody"/>
    <property type="evidence" value="ECO:0000314"/>
    <property type="project" value="UniProtKB"/>
</dbReference>
<dbReference type="GO" id="GO:1990023">
    <property type="term" value="C:mitotic spindle midzone"/>
    <property type="evidence" value="ECO:0000314"/>
    <property type="project" value="UniProtKB"/>
</dbReference>
<dbReference type="GO" id="GO:0005730">
    <property type="term" value="C:nucleolus"/>
    <property type="evidence" value="ECO:0007669"/>
    <property type="project" value="UniProtKB-SubCell"/>
</dbReference>
<dbReference type="GO" id="GO:0005886">
    <property type="term" value="C:plasma membrane"/>
    <property type="evidence" value="ECO:0007669"/>
    <property type="project" value="UniProtKB-SubCell"/>
</dbReference>
<dbReference type="GO" id="GO:0005085">
    <property type="term" value="F:guanyl-nucleotide exchange factor activity"/>
    <property type="evidence" value="ECO:0007669"/>
    <property type="project" value="UniProtKB-KW"/>
</dbReference>
<dbReference type="GO" id="GO:0008017">
    <property type="term" value="F:microtubule binding"/>
    <property type="evidence" value="ECO:0000315"/>
    <property type="project" value="UniProtKB"/>
</dbReference>
<dbReference type="GO" id="GO:0019904">
    <property type="term" value="F:protein domain specific binding"/>
    <property type="evidence" value="ECO:0000353"/>
    <property type="project" value="UniProtKB"/>
</dbReference>
<dbReference type="GO" id="GO:0019901">
    <property type="term" value="F:protein kinase binding"/>
    <property type="evidence" value="ECO:0000353"/>
    <property type="project" value="UniProtKB"/>
</dbReference>
<dbReference type="GO" id="GO:0003723">
    <property type="term" value="F:RNA binding"/>
    <property type="evidence" value="ECO:0007005"/>
    <property type="project" value="UniProtKB"/>
</dbReference>
<dbReference type="GO" id="GO:0031267">
    <property type="term" value="F:small GTPase binding"/>
    <property type="evidence" value="ECO:0000353"/>
    <property type="project" value="UniProtKB"/>
</dbReference>
<dbReference type="GO" id="GO:0051301">
    <property type="term" value="P:cell division"/>
    <property type="evidence" value="ECO:0007669"/>
    <property type="project" value="UniProtKB-KW"/>
</dbReference>
<dbReference type="GO" id="GO:0072356">
    <property type="term" value="P:chromosome passenger complex localization to kinetochore"/>
    <property type="evidence" value="ECO:0000315"/>
    <property type="project" value="UniProtKB"/>
</dbReference>
<dbReference type="GO" id="GO:0045184">
    <property type="term" value="P:establishment of protein localization"/>
    <property type="evidence" value="ECO:0007669"/>
    <property type="project" value="Ensembl"/>
</dbReference>
<dbReference type="GO" id="GO:0048041">
    <property type="term" value="P:focal adhesion assembly"/>
    <property type="evidence" value="ECO:0000314"/>
    <property type="project" value="UniProtKB"/>
</dbReference>
<dbReference type="GO" id="GO:0007229">
    <property type="term" value="P:integrin-mediated signaling pathway"/>
    <property type="evidence" value="ECO:0000314"/>
    <property type="project" value="UniProtKB"/>
</dbReference>
<dbReference type="GO" id="GO:0051895">
    <property type="term" value="P:negative regulation of focal adhesion assembly"/>
    <property type="evidence" value="ECO:0000250"/>
    <property type="project" value="UniProtKB"/>
</dbReference>
<dbReference type="GO" id="GO:0034260">
    <property type="term" value="P:negative regulation of GTPase activity"/>
    <property type="evidence" value="ECO:0000315"/>
    <property type="project" value="UniProtKB"/>
</dbReference>
<dbReference type="GO" id="GO:1900025">
    <property type="term" value="P:negative regulation of substrate adhesion-dependent cell spreading"/>
    <property type="evidence" value="ECO:0000250"/>
    <property type="project" value="UniProtKB"/>
</dbReference>
<dbReference type="GO" id="GO:0051987">
    <property type="term" value="P:positive regulation of attachment of spindle microtubules to kinetochore"/>
    <property type="evidence" value="ECO:0000315"/>
    <property type="project" value="UniProtKB"/>
</dbReference>
<dbReference type="GO" id="GO:0010971">
    <property type="term" value="P:positive regulation of G2/M transition of mitotic cell cycle"/>
    <property type="evidence" value="ECO:0000315"/>
    <property type="project" value="UniProtKB"/>
</dbReference>
<dbReference type="GO" id="GO:0030334">
    <property type="term" value="P:regulation of cell migration"/>
    <property type="evidence" value="ECO:0000250"/>
    <property type="project" value="UniProtKB"/>
</dbReference>
<dbReference type="GO" id="GO:0010762">
    <property type="term" value="P:regulation of fibroblast migration"/>
    <property type="evidence" value="ECO:0007669"/>
    <property type="project" value="Ensembl"/>
</dbReference>
<dbReference type="GO" id="GO:1900027">
    <property type="term" value="P:regulation of ruffle assembly"/>
    <property type="evidence" value="ECO:0007669"/>
    <property type="project" value="Ensembl"/>
</dbReference>
<dbReference type="FunFam" id="2.130.10.30:FF:000022">
    <property type="entry name" value="RCC2 isoform 1"/>
    <property type="match status" value="1"/>
</dbReference>
<dbReference type="FunFam" id="2.130.10.30:FF:000009">
    <property type="entry name" value="Regulator of chromosome condensation 2"/>
    <property type="match status" value="1"/>
</dbReference>
<dbReference type="Gene3D" id="2.130.10.30">
    <property type="entry name" value="Regulator of chromosome condensation 1/beta-lactamase-inhibitor protein II"/>
    <property type="match status" value="2"/>
</dbReference>
<dbReference type="InterPro" id="IPR009091">
    <property type="entry name" value="RCC1/BLIP-II"/>
</dbReference>
<dbReference type="InterPro" id="IPR028641">
    <property type="entry name" value="RCC2"/>
</dbReference>
<dbReference type="InterPro" id="IPR000408">
    <property type="entry name" value="Reg_chr_condens"/>
</dbReference>
<dbReference type="PANTHER" id="PTHR46207">
    <property type="entry name" value="PROTEIN RCC2"/>
    <property type="match status" value="1"/>
</dbReference>
<dbReference type="PANTHER" id="PTHR46207:SF1">
    <property type="entry name" value="PROTEIN RCC2"/>
    <property type="match status" value="1"/>
</dbReference>
<dbReference type="Pfam" id="PF25390">
    <property type="entry name" value="WD40_RLD"/>
    <property type="match status" value="1"/>
</dbReference>
<dbReference type="PRINTS" id="PR00633">
    <property type="entry name" value="RCCNDNSATION"/>
</dbReference>
<dbReference type="SUPFAM" id="SSF50985">
    <property type="entry name" value="RCC1/BLIP-II"/>
    <property type="match status" value="1"/>
</dbReference>
<dbReference type="PROSITE" id="PS00626">
    <property type="entry name" value="RCC1_2"/>
    <property type="match status" value="2"/>
</dbReference>
<dbReference type="PROSITE" id="PS50012">
    <property type="entry name" value="RCC1_3"/>
    <property type="match status" value="5"/>
</dbReference>
<accession>Q9P258</accession>
<accession>Q8IVL9</accession>
<accession>Q9BSN6</accession>
<accession>Q9NPV8</accession>
<proteinExistence type="evidence at protein level"/>
<feature type="chain" id="PRO_0000206652" description="Protein RCC2">
    <location>
        <begin position="1"/>
        <end position="522"/>
    </location>
</feature>
<feature type="repeat" description="RCC1 1">
    <location>
        <begin position="103"/>
        <end position="165"/>
    </location>
</feature>
<feature type="repeat" description="RCC1 2">
    <location>
        <begin position="168"/>
        <end position="219"/>
    </location>
</feature>
<feature type="repeat" description="RCC1 3">
    <location>
        <begin position="221"/>
        <end position="271"/>
    </location>
</feature>
<feature type="repeat" description="RCC1 4">
    <location>
        <begin position="273"/>
        <end position="347"/>
    </location>
</feature>
<feature type="repeat" description="RCC1 5">
    <location>
        <begin position="348"/>
        <end position="401"/>
    </location>
</feature>
<feature type="repeat" description="RCC1 6">
    <location>
        <begin position="403"/>
        <end position="447"/>
    </location>
</feature>
<feature type="repeat" description="RCC1 7">
    <location>
        <begin position="448"/>
        <end position="501"/>
    </location>
</feature>
<feature type="region of interest" description="Disordered" evidence="2">
    <location>
        <begin position="1"/>
        <end position="83"/>
    </location>
</feature>
<feature type="region of interest" description="Required for interaction with RAC1" evidence="8">
    <location>
        <begin position="318"/>
        <end position="325"/>
    </location>
</feature>
<feature type="region of interest" description="Disordered" evidence="2">
    <location>
        <begin position="502"/>
        <end position="522"/>
    </location>
</feature>
<feature type="compositionally biased region" description="Basic residues" evidence="2">
    <location>
        <begin position="24"/>
        <end position="36"/>
    </location>
</feature>
<feature type="compositionally biased region" description="Low complexity" evidence="2">
    <location>
        <begin position="71"/>
        <end position="82"/>
    </location>
</feature>
<feature type="compositionally biased region" description="Basic and acidic residues" evidence="2">
    <location>
        <begin position="502"/>
        <end position="515"/>
    </location>
</feature>
<feature type="modified residue" description="Phosphoserine" evidence="20">
    <location>
        <position position="16"/>
    </location>
</feature>
<feature type="modified residue" description="Phosphothreonine" evidence="21">
    <location>
        <position position="20"/>
    </location>
</feature>
<feature type="modified residue" description="Phosphoserine" evidence="17">
    <location>
        <position position="43"/>
    </location>
</feature>
<feature type="modified residue" description="Phosphoserine" evidence="17">
    <location>
        <position position="44"/>
    </location>
</feature>
<feature type="modified residue" description="Phosphoserine" evidence="17">
    <location>
        <position position="45"/>
    </location>
</feature>
<feature type="modified residue" description="Phosphoserine" evidence="17">
    <location>
        <position position="46"/>
    </location>
</feature>
<feature type="modified residue" description="Phosphoserine" evidence="17">
    <location>
        <position position="50"/>
    </location>
</feature>
<feature type="modified residue" description="Phosphoserine" evidence="17 18">
    <location>
        <position position="51"/>
    </location>
</feature>
<feature type="modified residue" description="N6-acetyllysine" evidence="19">
    <location>
        <position position="92"/>
    </location>
</feature>
<feature type="modified residue" description="N6-acetyllysine" evidence="1">
    <location>
        <position position="124"/>
    </location>
</feature>
<feature type="modified residue" description="N6-acetyllysine" evidence="19">
    <location>
        <position position="293"/>
    </location>
</feature>
<feature type="modified residue" description="Phosphothreonine" evidence="20">
    <location>
        <position position="342"/>
    </location>
</feature>
<feature type="modified residue" description="N6-acetyllysine" evidence="19">
    <location>
        <position position="377"/>
    </location>
</feature>
<feature type="mutagenesis site" description="Loss of interaction with RAC1." evidence="8">
    <location>
        <begin position="318"/>
        <end position="325"/>
    </location>
</feature>
<feature type="mutagenesis site" description="Loss of interaction with RAC1 and loss of regulation of RAC1 activation." evidence="6">
    <original>K</original>
    <variation>E</variation>
    <location>
        <position position="439"/>
    </location>
</feature>
<feature type="sequence conflict" description="In Ref. 4." evidence="13" ref="4">
    <original>LAGV</original>
    <variation>RTRG</variation>
    <location>
        <begin position="145"/>
        <end position="148"/>
    </location>
</feature>
<feature type="strand" evidence="22">
    <location>
        <begin position="104"/>
        <end position="111"/>
    </location>
</feature>
<feature type="turn" evidence="22">
    <location>
        <begin position="114"/>
        <end position="118"/>
    </location>
</feature>
<feature type="strand" evidence="22">
    <location>
        <begin position="119"/>
        <end position="121"/>
    </location>
</feature>
<feature type="helix" evidence="22">
    <location>
        <begin position="124"/>
        <end position="129"/>
    </location>
</feature>
<feature type="strand" evidence="22">
    <location>
        <begin position="135"/>
        <end position="142"/>
    </location>
</feature>
<feature type="helix" evidence="22">
    <location>
        <begin position="143"/>
        <end position="145"/>
    </location>
</feature>
<feature type="strand" evidence="22">
    <location>
        <begin position="150"/>
        <end position="154"/>
    </location>
</feature>
<feature type="strand" evidence="22">
    <location>
        <begin position="160"/>
        <end position="166"/>
    </location>
</feature>
<feature type="strand" evidence="22">
    <location>
        <begin position="171"/>
        <end position="175"/>
    </location>
</feature>
<feature type="strand" evidence="22">
    <location>
        <begin position="184"/>
        <end position="186"/>
    </location>
</feature>
<feature type="strand" evidence="22">
    <location>
        <begin position="190"/>
        <end position="195"/>
    </location>
</feature>
<feature type="helix" evidence="22">
    <location>
        <begin position="197"/>
        <end position="199"/>
    </location>
</feature>
<feature type="strand" evidence="22">
    <location>
        <begin position="204"/>
        <end position="209"/>
    </location>
</feature>
<feature type="strand" evidence="22">
    <location>
        <begin position="211"/>
        <end position="218"/>
    </location>
</feature>
<feature type="strand" evidence="22">
    <location>
        <begin position="223"/>
        <end position="229"/>
    </location>
</feature>
<feature type="strand" evidence="22">
    <location>
        <begin position="236"/>
        <end position="238"/>
    </location>
</feature>
<feature type="strand" evidence="22">
    <location>
        <begin position="240"/>
        <end position="248"/>
    </location>
</feature>
<feature type="strand" evidence="22">
    <location>
        <begin position="256"/>
        <end position="261"/>
    </location>
</feature>
<feature type="strand" evidence="22">
    <location>
        <begin position="263"/>
        <end position="270"/>
    </location>
</feature>
<feature type="strand" evidence="22">
    <location>
        <begin position="275"/>
        <end position="279"/>
    </location>
</feature>
<feature type="helix" evidence="22">
    <location>
        <begin position="282"/>
        <end position="284"/>
    </location>
</feature>
<feature type="strand" evidence="22">
    <location>
        <begin position="287"/>
        <end position="289"/>
    </location>
</feature>
<feature type="strand" evidence="22">
    <location>
        <begin position="306"/>
        <end position="311"/>
    </location>
</feature>
<feature type="strand" evidence="22">
    <location>
        <begin position="316"/>
        <end position="318"/>
    </location>
</feature>
<feature type="strand" evidence="22">
    <location>
        <begin position="324"/>
        <end position="326"/>
    </location>
</feature>
<feature type="strand" evidence="22">
    <location>
        <begin position="332"/>
        <end position="337"/>
    </location>
</feature>
<feature type="strand" evidence="22">
    <location>
        <begin position="339"/>
        <end position="346"/>
    </location>
</feature>
<feature type="strand" evidence="22">
    <location>
        <begin position="351"/>
        <end position="355"/>
    </location>
</feature>
<feature type="helix" evidence="22">
    <location>
        <begin position="358"/>
        <end position="360"/>
    </location>
</feature>
<feature type="strand" evidence="22">
    <location>
        <begin position="364"/>
        <end position="366"/>
    </location>
</feature>
<feature type="strand" evidence="22">
    <location>
        <begin position="370"/>
        <end position="375"/>
    </location>
</feature>
<feature type="helix" evidence="22">
    <location>
        <begin position="377"/>
        <end position="380"/>
    </location>
</feature>
<feature type="strand" evidence="22">
    <location>
        <begin position="386"/>
        <end position="392"/>
    </location>
</feature>
<feature type="strand" evidence="22">
    <location>
        <begin position="395"/>
        <end position="400"/>
    </location>
</feature>
<feature type="strand" evidence="22">
    <location>
        <begin position="405"/>
        <end position="409"/>
    </location>
</feature>
<feature type="turn" evidence="22">
    <location>
        <begin position="413"/>
        <end position="415"/>
    </location>
</feature>
<feature type="strand" evidence="22">
    <location>
        <begin position="418"/>
        <end position="423"/>
    </location>
</feature>
<feature type="helix" evidence="22">
    <location>
        <begin position="425"/>
        <end position="427"/>
    </location>
</feature>
<feature type="strand" evidence="22">
    <location>
        <begin position="432"/>
        <end position="437"/>
    </location>
</feature>
<feature type="strand" evidence="22">
    <location>
        <begin position="442"/>
        <end position="446"/>
    </location>
</feature>
<feature type="strand" evidence="22">
    <location>
        <begin position="449"/>
        <end position="454"/>
    </location>
</feature>
<feature type="strand" evidence="22">
    <location>
        <begin position="472"/>
        <end position="477"/>
    </location>
</feature>
<feature type="helix" evidence="22">
    <location>
        <begin position="479"/>
        <end position="481"/>
    </location>
</feature>
<feature type="strand" evidence="22">
    <location>
        <begin position="486"/>
        <end position="491"/>
    </location>
</feature>
<feature type="strand" evidence="22">
    <location>
        <begin position="493"/>
        <end position="501"/>
    </location>
</feature>
<feature type="helix" evidence="22">
    <location>
        <begin position="505"/>
        <end position="513"/>
    </location>
</feature>
<comment type="function">
    <text evidence="3 5 6 7 8">Multifunctional protein that may affect its functions by regulating the activity of small GTPases, such as RAC1 and RALA (PubMed:12919680, PubMed:25074804, PubMed:26158537, PubMed:28869598). Required for normal progress through the cell cycle, both during interphase and during mitosis (PubMed:12919680, PubMed:23388455, PubMed:26158537). Required for the presence of normal levels of MAD2L1, AURKB and BIRC5 on inner centromeres during mitosis, and for normal attachment of kinetochores to mitotic spindles (PubMed:12919680, PubMed:26158537). Required for normal organization of the microtubule cytoskeleton in interphase cells (PubMed:23388455). Functions as guanine nucleotide exchange factor (GEF) for RALA (PubMed:26158537). Interferes with the activation of RAC1 by guanine nucleotide exchange factors (PubMed:25074804). Prevents accumulation of active, GTP-bound RAC1, and suppresses RAC1-mediated reorganization of the actin cytoskeleton and formation of membrane protrusions (PubMed:25074804, PubMed:28869598). Required for normal cellular responses to contacts with the extracellular matrix of adjacent cells, and for directional cell migration in response to a fibronectin gradient (in vitro) (PubMed:25074804, PubMed:28869598).</text>
</comment>
<comment type="subunit">
    <text evidence="3 6 8">Interacts with RAC1 (PubMed:12919680, PubMed:25074804, PubMed:28869598). Interacts with nucleotide-free and with GDP and GTP-bound forms of RAC1, with a slight preference for GDP-bound RAC1 (PubMed:25074804). Binds preferentially to the nucleotide-free form of RAC1 (PubMed:12919680). Interacts with CORO1C (PubMed:25074804). Interacts with microtubules (PubMed:12919680).</text>
</comment>
<comment type="subcellular location">
    <subcellularLocation>
        <location evidence="14">Nucleus</location>
        <location evidence="14">Nucleolus</location>
    </subcellularLocation>
    <subcellularLocation>
        <location evidence="5">Nucleus</location>
    </subcellularLocation>
    <subcellularLocation>
        <location evidence="5">Cytoplasm</location>
        <location evidence="5">Cytoskeleton</location>
    </subcellularLocation>
    <subcellularLocation>
        <location evidence="3 4 10">Chromosome</location>
        <location evidence="3 4 10">Centromere</location>
    </subcellularLocation>
    <subcellularLocation>
        <location evidence="4 10">Cytoplasm</location>
        <location evidence="4 10">Cytoskeleton</location>
        <location evidence="4 10">Spindle</location>
    </subcellularLocation>
    <subcellularLocation>
        <location evidence="3 4 10">Chromosome</location>
    </subcellularLocation>
    <subcellularLocation>
        <location evidence="3 4 10">Midbody</location>
    </subcellularLocation>
    <subcellularLocation>
        <location evidence="6">Cell membrane</location>
        <topology evidence="15">Peripheral membrane protein</topology>
        <orientation evidence="15">Cytoplasmic side</orientation>
    </subcellularLocation>
    <text evidence="3 4 5 6 9 10">Appears in the nucleus at G2, then concentrates at the inner centromere region of chromosomes during prophase. Redistributes to the midzone of the mitotic spindle during anaphase. Here, the protein covers the entire equatorial diameter from cortex to cortex (PubMed:12919680, PubMed:1939370, PubMed:7559776, PubMed:9914378). Colocalizes with cytoplasmic microtubules in interphase cells (PubMed:23388455). Colocalizes with RAC1 at the cell membrane (PubMed:25074804).</text>
</comment>
<comment type="induction">
    <text evidence="8">Induced by TP53/p53 in response to oxidative stress and DNA damage.</text>
</comment>
<comment type="caution">
    <text evidence="3 6 8">Its precise role in the regulation of RAC1 activity is under debate. Was originally proposed to function as a guanine nucleotide exchange factor for RAC1, but later publications indicate it attenuates RAC1 activation by guanine nucleotide exchange factors and prevents accumulation of active, GTP-bound RAC1 (PubMed:12919680, PubMed:25074804, PubMed:28869598). Conflicting results have also been reported regarding its preferential interaction with nucleotide-free RAC1, as opposed to GPD or GTP-bound RAC1 (PubMed:12919680, PubMed:25074804).</text>
</comment>
<comment type="sequence caution" evidence="13">
    <conflict type="erroneous initiation">
        <sequence resource="EMBL-CDS" id="BAA95994"/>
    </conflict>
</comment>
<comment type="sequence caution" evidence="13">
    <conflict type="frameshift">
        <sequence resource="EMBL-CDS" id="CAB94882"/>
    </conflict>
</comment>
<protein>
    <recommendedName>
        <fullName>Protein RCC2</fullName>
    </recommendedName>
    <alternativeName>
        <fullName evidence="11">RCC1-like protein TD-60</fullName>
    </alternativeName>
    <alternativeName>
        <fullName evidence="12">Telophase disk protein of 60 kDa</fullName>
    </alternativeName>
</protein>
<evidence type="ECO:0000250" key="1">
    <source>
        <dbReference type="UniProtKB" id="Q8BK67"/>
    </source>
</evidence>
<evidence type="ECO:0000256" key="2">
    <source>
        <dbReference type="SAM" id="MobiDB-lite"/>
    </source>
</evidence>
<evidence type="ECO:0000269" key="3">
    <source>
    </source>
</evidence>
<evidence type="ECO:0000269" key="4">
    <source>
    </source>
</evidence>
<evidence type="ECO:0000269" key="5">
    <source>
    </source>
</evidence>
<evidence type="ECO:0000269" key="6">
    <source>
    </source>
</evidence>
<evidence type="ECO:0000269" key="7">
    <source>
    </source>
</evidence>
<evidence type="ECO:0000269" key="8">
    <source>
    </source>
</evidence>
<evidence type="ECO:0000269" key="9">
    <source>
    </source>
</evidence>
<evidence type="ECO:0000269" key="10">
    <source>
    </source>
</evidence>
<evidence type="ECO:0000303" key="11">
    <source>
    </source>
</evidence>
<evidence type="ECO:0000303" key="12">
    <source>
    </source>
</evidence>
<evidence type="ECO:0000305" key="13"/>
<evidence type="ECO:0000305" key="14">
    <source>
    </source>
</evidence>
<evidence type="ECO:0000305" key="15">
    <source>
    </source>
</evidence>
<evidence type="ECO:0007744" key="16">
    <source>
        <dbReference type="PDB" id="5GWN"/>
    </source>
</evidence>
<evidence type="ECO:0007744" key="17">
    <source>
    </source>
</evidence>
<evidence type="ECO:0007744" key="18">
    <source>
    </source>
</evidence>
<evidence type="ECO:0007744" key="19">
    <source>
    </source>
</evidence>
<evidence type="ECO:0007744" key="20">
    <source>
    </source>
</evidence>
<evidence type="ECO:0007744" key="21">
    <source>
    </source>
</evidence>
<evidence type="ECO:0007829" key="22">
    <source>
        <dbReference type="PDB" id="5GWN"/>
    </source>
</evidence>
<reference key="1">
    <citation type="journal article" date="2003" name="Dev. Cell">
        <title>The mammalian passenger protein TD-60 is an RCC1 family member with an essential role in prometaphase to metaphase progression.</title>
        <authorList>
            <person name="Mollinari C."/>
            <person name="Reynaud C."/>
            <person name="Martineau-Thuillier S."/>
            <person name="Monier S."/>
            <person name="Kieffer S."/>
            <person name="Garin J."/>
            <person name="Andreassen P.R."/>
            <person name="Boulet A."/>
            <person name="Goud B."/>
            <person name="Kleman J.-P."/>
            <person name="Margolis R.L."/>
        </authorList>
    </citation>
    <scope>NUCLEOTIDE SEQUENCE [MRNA]</scope>
    <scope>FUNCTION</scope>
    <scope>IDENTIFICATION BY MASS SPECTROMETRY</scope>
    <scope>SUBCELLULAR LOCATION</scope>
    <scope>INTERACTION WITH MICROTUBULES AND RAC1</scope>
</reference>
<reference key="2">
    <citation type="journal article" date="2000" name="DNA Res.">
        <title>Prediction of the coding sequences of unidentified human genes. XVII. The complete sequences of 100 new cDNA clones from brain which code for large proteins in vitro.</title>
        <authorList>
            <person name="Nagase T."/>
            <person name="Kikuno R."/>
            <person name="Ishikawa K."/>
            <person name="Hirosawa M."/>
            <person name="Ohara O."/>
        </authorList>
    </citation>
    <scope>NUCLEOTIDE SEQUENCE [LARGE SCALE MRNA]</scope>
    <source>
        <tissue>Brain</tissue>
    </source>
</reference>
<reference key="3">
    <citation type="journal article" date="2004" name="Genome Res.">
        <title>The status, quality, and expansion of the NIH full-length cDNA project: the Mammalian Gene Collection (MGC).</title>
        <authorList>
            <consortium name="The MGC Project Team"/>
        </authorList>
    </citation>
    <scope>NUCLEOTIDE SEQUENCE [LARGE SCALE MRNA]</scope>
    <source>
        <tissue>Muscle</tissue>
        <tissue>Natural killer cell</tissue>
        <tissue>Uterus</tissue>
    </source>
</reference>
<reference key="4">
    <citation type="journal article" date="2007" name="BMC Genomics">
        <title>The full-ORF clone resource of the German cDNA consortium.</title>
        <authorList>
            <person name="Bechtel S."/>
            <person name="Rosenfelder H."/>
            <person name="Duda A."/>
            <person name="Schmidt C.P."/>
            <person name="Ernst U."/>
            <person name="Wellenreuther R."/>
            <person name="Mehrle A."/>
            <person name="Schuster C."/>
            <person name="Bahr A."/>
            <person name="Bloecker H."/>
            <person name="Heubner D."/>
            <person name="Hoerlein A."/>
            <person name="Michel G."/>
            <person name="Wedler H."/>
            <person name="Koehrer K."/>
            <person name="Ottenwaelder B."/>
            <person name="Poustka A."/>
            <person name="Wiemann S."/>
            <person name="Schupp I."/>
        </authorList>
    </citation>
    <scope>NUCLEOTIDE SEQUENCE [LARGE SCALE MRNA] OF 145-477</scope>
    <source>
        <tissue>Melanoma</tissue>
    </source>
</reference>
<reference key="5">
    <citation type="journal article" date="1991" name="J. Cell Sci.">
        <title>Telophase disc: a new mammalian mitotic organelle that bisects telophase cells with a possible function in cytokinesis.</title>
        <authorList>
            <person name="Andreassen P.R."/>
            <person name="Palmer D.K."/>
            <person name="Wener M.H."/>
            <person name="Margolis R.L."/>
        </authorList>
    </citation>
    <scope>SUBCELLULAR LOCATION</scope>
</reference>
<reference key="6">
    <citation type="journal article" date="1995" name="J. Cell Biol.">
        <title>Delay of HeLa cell cleavage into interphase using dihydrocytochalasin B: retention of a postmitotic spindle and telophase disc correlates with synchronous cleavage recovery.</title>
        <authorList>
            <person name="Martineau S.N."/>
            <person name="Andreassen P.R."/>
            <person name="Margolis R.L."/>
        </authorList>
    </citation>
    <scope>SUBCELLULAR LOCATION</scope>
</reference>
<reference key="7">
    <citation type="journal article" date="1998" name="Chromosoma">
        <title>Colocalization of TD-60 and INCENP throughout G2 and mitosis: evidence for their possible interaction in signalling cytokinesis.</title>
        <authorList>
            <person name="Martineau-Thuillier S."/>
            <person name="Andreassen P.R."/>
            <person name="Margolis R.L."/>
        </authorList>
    </citation>
    <scope>SUBCELLULAR LOCATION</scope>
</reference>
<reference key="8">
    <citation type="journal article" date="2002" name="Mol. Biol. Cell">
        <title>Functional proteomic analysis of human nucleolus.</title>
        <authorList>
            <person name="Scherl A."/>
            <person name="Coute Y."/>
            <person name="Deon C."/>
            <person name="Calle A."/>
            <person name="Kindbeiter K."/>
            <person name="Sanchez J.-C."/>
            <person name="Greco A."/>
            <person name="Hochstrasser D.F."/>
            <person name="Diaz J.-J."/>
        </authorList>
    </citation>
    <scope>SUBCELLULAR LOCATION [LARGE SCALE ANALYSIS]</scope>
    <source>
        <tissue>Cervix carcinoma</tissue>
    </source>
</reference>
<reference key="9">
    <citation type="journal article" date="2006" name="Cell">
        <title>Global, in vivo, and site-specific phosphorylation dynamics in signaling networks.</title>
        <authorList>
            <person name="Olsen J.V."/>
            <person name="Blagoev B."/>
            <person name="Gnad F."/>
            <person name="Macek B."/>
            <person name="Kumar C."/>
            <person name="Mortensen P."/>
            <person name="Mann M."/>
        </authorList>
    </citation>
    <scope>PHOSPHORYLATION [LARGE SCALE ANALYSIS] AT SER-43; SER-44; SER-45; SER-46; SER-50 AND SER-51</scope>
    <scope>IDENTIFICATION BY MASS SPECTROMETRY [LARGE SCALE ANALYSIS]</scope>
    <source>
        <tissue>Cervix carcinoma</tissue>
    </source>
</reference>
<reference key="10">
    <citation type="journal article" date="2008" name="Proc. Natl. Acad. Sci. U.S.A.">
        <title>A quantitative atlas of mitotic phosphorylation.</title>
        <authorList>
            <person name="Dephoure N."/>
            <person name="Zhou C."/>
            <person name="Villen J."/>
            <person name="Beausoleil S.A."/>
            <person name="Bakalarski C.E."/>
            <person name="Elledge S.J."/>
            <person name="Gygi S.P."/>
        </authorList>
    </citation>
    <scope>PHOSPHORYLATION [LARGE SCALE ANALYSIS] AT SER-51</scope>
    <scope>IDENTIFICATION BY MASS SPECTROMETRY [LARGE SCALE ANALYSIS]</scope>
    <source>
        <tissue>Cervix carcinoma</tissue>
    </source>
</reference>
<reference key="11">
    <citation type="journal article" date="2009" name="Anal. Chem.">
        <title>Lys-N and trypsin cover complementary parts of the phosphoproteome in a refined SCX-based approach.</title>
        <authorList>
            <person name="Gauci S."/>
            <person name="Helbig A.O."/>
            <person name="Slijper M."/>
            <person name="Krijgsveld J."/>
            <person name="Heck A.J."/>
            <person name="Mohammed S."/>
        </authorList>
    </citation>
    <scope>IDENTIFICATION BY MASS SPECTROMETRY [LARGE SCALE ANALYSIS]</scope>
</reference>
<reference key="12">
    <citation type="journal article" date="2009" name="Sci. Signal.">
        <title>Quantitative phosphoproteomic analysis of T cell receptor signaling reveals system-wide modulation of protein-protein interactions.</title>
        <authorList>
            <person name="Mayya V."/>
            <person name="Lundgren D.H."/>
            <person name="Hwang S.-I."/>
            <person name="Rezaul K."/>
            <person name="Wu L."/>
            <person name="Eng J.K."/>
            <person name="Rodionov V."/>
            <person name="Han D.K."/>
        </authorList>
    </citation>
    <scope>PHOSPHORYLATION [LARGE SCALE ANALYSIS] AT SER-16 AND THR-342</scope>
    <scope>IDENTIFICATION BY MASS SPECTROMETRY [LARGE SCALE ANALYSIS]</scope>
    <source>
        <tissue>Leukemic T-cell</tissue>
    </source>
</reference>
<reference key="13">
    <citation type="journal article" date="2009" name="Science">
        <title>Lysine acetylation targets protein complexes and co-regulates major cellular functions.</title>
        <authorList>
            <person name="Choudhary C."/>
            <person name="Kumar C."/>
            <person name="Gnad F."/>
            <person name="Nielsen M.L."/>
            <person name="Rehman M."/>
            <person name="Walther T.C."/>
            <person name="Olsen J.V."/>
            <person name="Mann M."/>
        </authorList>
    </citation>
    <scope>ACETYLATION [LARGE SCALE ANALYSIS] AT LYS-92; LYS-293 AND LYS-377</scope>
    <scope>IDENTIFICATION BY MASS SPECTROMETRY [LARGE SCALE ANALYSIS]</scope>
</reference>
<reference key="14">
    <citation type="journal article" date="2010" name="Sci. Signal.">
        <title>Quantitative phosphoproteomics reveals widespread full phosphorylation site occupancy during mitosis.</title>
        <authorList>
            <person name="Olsen J.V."/>
            <person name="Vermeulen M."/>
            <person name="Santamaria A."/>
            <person name="Kumar C."/>
            <person name="Miller M.L."/>
            <person name="Jensen L.J."/>
            <person name="Gnad F."/>
            <person name="Cox J."/>
            <person name="Jensen T.S."/>
            <person name="Nigg E.A."/>
            <person name="Brunak S."/>
            <person name="Mann M."/>
        </authorList>
    </citation>
    <scope>IDENTIFICATION BY MASS SPECTROMETRY [LARGE SCALE ANALYSIS]</scope>
    <source>
        <tissue>Cervix carcinoma</tissue>
    </source>
</reference>
<reference key="15">
    <citation type="journal article" date="2011" name="BMC Syst. Biol.">
        <title>Initial characterization of the human central proteome.</title>
        <authorList>
            <person name="Burkard T.R."/>
            <person name="Planyavsky M."/>
            <person name="Kaupe I."/>
            <person name="Breitwieser F.P."/>
            <person name="Buerckstuemmer T."/>
            <person name="Bennett K.L."/>
            <person name="Superti-Furga G."/>
            <person name="Colinge J."/>
        </authorList>
    </citation>
    <scope>IDENTIFICATION BY MASS SPECTROMETRY [LARGE SCALE ANALYSIS]</scope>
</reference>
<reference key="16">
    <citation type="journal article" date="2011" name="Sci. Signal.">
        <title>System-wide temporal characterization of the proteome and phosphoproteome of human embryonic stem cell differentiation.</title>
        <authorList>
            <person name="Rigbolt K.T."/>
            <person name="Prokhorova T.A."/>
            <person name="Akimov V."/>
            <person name="Henningsen J."/>
            <person name="Johansen P.T."/>
            <person name="Kratchmarova I."/>
            <person name="Kassem M."/>
            <person name="Mann M."/>
            <person name="Olsen J.V."/>
            <person name="Blagoev B."/>
        </authorList>
    </citation>
    <scope>IDENTIFICATION BY MASS SPECTROMETRY [LARGE SCALE ANALYSIS]</scope>
</reference>
<reference key="17">
    <citation type="journal article" date="2013" name="Cell Cycle">
        <title>TD-60 is required for interphase cell cycle progression.</title>
        <authorList>
            <person name="Yenjerla M."/>
            <person name="Panopoulos A."/>
            <person name="Reynaud C."/>
            <person name="Fotedar R."/>
            <person name="Margolis R.L."/>
        </authorList>
    </citation>
    <scope>FUNCTION</scope>
    <scope>SUBCELLULAR LOCATION</scope>
</reference>
<reference key="18">
    <citation type="journal article" date="2013" name="J. Proteome Res.">
        <title>Toward a comprehensive characterization of a human cancer cell phosphoproteome.</title>
        <authorList>
            <person name="Zhou H."/>
            <person name="Di Palma S."/>
            <person name="Preisinger C."/>
            <person name="Peng M."/>
            <person name="Polat A.N."/>
            <person name="Heck A.J."/>
            <person name="Mohammed S."/>
        </authorList>
    </citation>
    <scope>PHOSPHORYLATION [LARGE SCALE ANALYSIS] AT THR-20</scope>
    <scope>IDENTIFICATION BY MASS SPECTROMETRY [LARGE SCALE ANALYSIS]</scope>
    <source>
        <tissue>Cervix carcinoma</tissue>
        <tissue>Erythroleukemia</tissue>
    </source>
</reference>
<reference key="19">
    <citation type="journal article" date="2014" name="J. Cell Sci.">
        <title>Coronin-1C and RCC2 guide mesenchymal migration by trafficking Rac1 and controlling GEF exposure.</title>
        <authorList>
            <person name="Williamson R.C."/>
            <person name="Cowell C.A."/>
            <person name="Hammond C.L."/>
            <person name="Bergen D.J."/>
            <person name="Roper J.A."/>
            <person name="Feng Y."/>
            <person name="Rendall T.C."/>
            <person name="Race P.R."/>
            <person name="Bass M.D."/>
        </authorList>
    </citation>
    <scope>FUNCTION</scope>
    <scope>INTERACTION WITH RAC1 AND CORO1C</scope>
    <scope>SUBCELLULAR LOCATION</scope>
    <scope>MUTAGENESIS OF LYS-439</scope>
</reference>
<reference key="20">
    <citation type="journal article" date="2015" name="Nat. Commun.">
        <title>TD-60 links RalA GTPase function to the CPC in mitosis.</title>
        <authorList>
            <person name="Papini D."/>
            <person name="Langemeyer L."/>
            <person name="Abad M.A."/>
            <person name="Kerr A."/>
            <person name="Samejima I."/>
            <person name="Eyers P.A."/>
            <person name="Jeyaprakash A.A."/>
            <person name="Higgins J.M."/>
            <person name="Barr F.A."/>
            <person name="Earnshaw W.C."/>
        </authorList>
    </citation>
    <scope>FUNCTION</scope>
</reference>
<reference evidence="16" key="21">
    <citation type="journal article" date="2018" name="Oncogene">
        <title>RCC2 is a novel p53 target in suppressing metastasis.</title>
        <authorList>
            <person name="Song C."/>
            <person name="Liang L."/>
            <person name="Jin Y."/>
            <person name="Li Y."/>
            <person name="Liu Y."/>
            <person name="Guo L."/>
            <person name="Wu C."/>
            <person name="Yun C.H."/>
            <person name="Yin Y."/>
        </authorList>
    </citation>
    <scope>X-RAY CRYSTALLOGRAPHY (1.31 ANGSTROMS) OF 89-522</scope>
    <scope>FUNCTION</scope>
    <scope>INTERACTION WITH RAC1</scope>
    <scope>INDUCTION</scope>
    <scope>MUTAGENESIS OF 318-LYS--LEU-325</scope>
</reference>